<feature type="chain" id="PRO_1000136759" description="Ribosome maturation factor RimP">
    <location>
        <begin position="1"/>
        <end position="226"/>
    </location>
</feature>
<feature type="region of interest" description="Disordered" evidence="2">
    <location>
        <begin position="190"/>
        <end position="226"/>
    </location>
</feature>
<feature type="compositionally biased region" description="Basic residues" evidence="2">
    <location>
        <begin position="204"/>
        <end position="215"/>
    </location>
</feature>
<proteinExistence type="inferred from homology"/>
<reference key="1">
    <citation type="submission" date="2008-10" db="EMBL/GenBank/DDBJ databases">
        <title>Complete sequence of Desulfovibrio vulgaris str. 'Miyazaki F'.</title>
        <authorList>
            <person name="Lucas S."/>
            <person name="Copeland A."/>
            <person name="Lapidus A."/>
            <person name="Glavina del Rio T."/>
            <person name="Dalin E."/>
            <person name="Tice H."/>
            <person name="Bruce D."/>
            <person name="Goodwin L."/>
            <person name="Pitluck S."/>
            <person name="Sims D."/>
            <person name="Brettin T."/>
            <person name="Detter J.C."/>
            <person name="Han C."/>
            <person name="Larimer F."/>
            <person name="Land M."/>
            <person name="Hauser L."/>
            <person name="Kyrpides N."/>
            <person name="Mikhailova N."/>
            <person name="Hazen T.C."/>
            <person name="Richardson P."/>
        </authorList>
    </citation>
    <scope>NUCLEOTIDE SEQUENCE [LARGE SCALE GENOMIC DNA]</scope>
    <source>
        <strain>DSM 19637 / Miyazaki F</strain>
    </source>
</reference>
<organism>
    <name type="scientific">Nitratidesulfovibrio vulgaris (strain DSM 19637 / Miyazaki F)</name>
    <name type="common">Desulfovibrio vulgaris</name>
    <dbReference type="NCBI Taxonomy" id="883"/>
    <lineage>
        <taxon>Bacteria</taxon>
        <taxon>Pseudomonadati</taxon>
        <taxon>Thermodesulfobacteriota</taxon>
        <taxon>Desulfovibrionia</taxon>
        <taxon>Desulfovibrionales</taxon>
        <taxon>Desulfovibrionaceae</taxon>
        <taxon>Nitratidesulfovibrio</taxon>
    </lineage>
</organism>
<comment type="function">
    <text evidence="1">Required for maturation of 30S ribosomal subunits.</text>
</comment>
<comment type="subcellular location">
    <subcellularLocation>
        <location evidence="1">Cytoplasm</location>
    </subcellularLocation>
</comment>
<comment type="similarity">
    <text evidence="1">Belongs to the RimP family.</text>
</comment>
<accession>B8DN15</accession>
<evidence type="ECO:0000255" key="1">
    <source>
        <dbReference type="HAMAP-Rule" id="MF_01077"/>
    </source>
</evidence>
<evidence type="ECO:0000256" key="2">
    <source>
        <dbReference type="SAM" id="MobiDB-lite"/>
    </source>
</evidence>
<sequence>MSTYPLRDAVAAIATPLADALGIALWGIEIIDGGRMVLRVYVDAKPGMPVPADTAEATESATPEGVALEGSTPEGVTIDQCARLSRQLGLALDVEDVVRDAYVLEVSSPGLERPFFEIAQVVPYVGRTIELTLAVPHPEWPGRRKFRADIVRVEGDTLTFLPDTAPRPDEDPAPISVAWDDVKKAHLIHVFPDTTRPQPGGKTGQRKKAQPKKPARGGAPHDDTTD</sequence>
<keyword id="KW-0963">Cytoplasm</keyword>
<keyword id="KW-0690">Ribosome biogenesis</keyword>
<dbReference type="EMBL" id="CP001197">
    <property type="protein sequence ID" value="ACL09455.1"/>
    <property type="molecule type" value="Genomic_DNA"/>
</dbReference>
<dbReference type="SMR" id="B8DN15"/>
<dbReference type="STRING" id="883.DvMF_2516"/>
<dbReference type="KEGG" id="dvm:DvMF_2516"/>
<dbReference type="eggNOG" id="COG0779">
    <property type="taxonomic scope" value="Bacteria"/>
</dbReference>
<dbReference type="HOGENOM" id="CLU_070525_1_1_7"/>
<dbReference type="OrthoDB" id="9805006at2"/>
<dbReference type="GO" id="GO:0005829">
    <property type="term" value="C:cytosol"/>
    <property type="evidence" value="ECO:0007669"/>
    <property type="project" value="TreeGrafter"/>
</dbReference>
<dbReference type="GO" id="GO:0000028">
    <property type="term" value="P:ribosomal small subunit assembly"/>
    <property type="evidence" value="ECO:0007669"/>
    <property type="project" value="TreeGrafter"/>
</dbReference>
<dbReference type="GO" id="GO:0006412">
    <property type="term" value="P:translation"/>
    <property type="evidence" value="ECO:0007669"/>
    <property type="project" value="TreeGrafter"/>
</dbReference>
<dbReference type="CDD" id="cd01734">
    <property type="entry name" value="YlxS_C"/>
    <property type="match status" value="1"/>
</dbReference>
<dbReference type="Gene3D" id="3.30.300.70">
    <property type="entry name" value="RimP-like superfamily, N-terminal"/>
    <property type="match status" value="1"/>
</dbReference>
<dbReference type="HAMAP" id="MF_01077">
    <property type="entry name" value="RimP"/>
    <property type="match status" value="1"/>
</dbReference>
<dbReference type="InterPro" id="IPR003728">
    <property type="entry name" value="Ribosome_maturation_RimP"/>
</dbReference>
<dbReference type="InterPro" id="IPR028998">
    <property type="entry name" value="RimP_C"/>
</dbReference>
<dbReference type="InterPro" id="IPR036847">
    <property type="entry name" value="RimP_C_sf"/>
</dbReference>
<dbReference type="InterPro" id="IPR028989">
    <property type="entry name" value="RimP_N"/>
</dbReference>
<dbReference type="InterPro" id="IPR035956">
    <property type="entry name" value="RimP_N_sf"/>
</dbReference>
<dbReference type="NCBIfam" id="NF011225">
    <property type="entry name" value="PRK14632.1"/>
    <property type="match status" value="1"/>
</dbReference>
<dbReference type="PANTHER" id="PTHR33867">
    <property type="entry name" value="RIBOSOME MATURATION FACTOR RIMP"/>
    <property type="match status" value="1"/>
</dbReference>
<dbReference type="PANTHER" id="PTHR33867:SF1">
    <property type="entry name" value="RIBOSOME MATURATION FACTOR RIMP"/>
    <property type="match status" value="1"/>
</dbReference>
<dbReference type="Pfam" id="PF02576">
    <property type="entry name" value="RimP_N"/>
    <property type="match status" value="1"/>
</dbReference>
<dbReference type="SUPFAM" id="SSF74942">
    <property type="entry name" value="YhbC-like, C-terminal domain"/>
    <property type="match status" value="1"/>
</dbReference>
<dbReference type="SUPFAM" id="SSF75420">
    <property type="entry name" value="YhbC-like, N-terminal domain"/>
    <property type="match status" value="1"/>
</dbReference>
<name>RIMP_NITV9</name>
<gene>
    <name evidence="1" type="primary">rimP</name>
    <name type="ordered locus">DvMF_2516</name>
</gene>
<protein>
    <recommendedName>
        <fullName evidence="1">Ribosome maturation factor RimP</fullName>
    </recommendedName>
</protein>